<comment type="function">
    <text evidence="4">Transcription factor that, with himB, probably co-regulates the him gene cluster that mediates the biosynthesis of himeic acid A, a ubiquitin-activating enzyme (E1) inhibitor.</text>
</comment>
<comment type="subcellular location">
    <subcellularLocation>
        <location evidence="1">Nucleus</location>
    </subcellularLocation>
</comment>
<organism>
    <name type="scientific">Aspergillus japonicus</name>
    <dbReference type="NCBI Taxonomy" id="34381"/>
    <lineage>
        <taxon>Eukaryota</taxon>
        <taxon>Fungi</taxon>
        <taxon>Dikarya</taxon>
        <taxon>Ascomycota</taxon>
        <taxon>Pezizomycotina</taxon>
        <taxon>Eurotiomycetes</taxon>
        <taxon>Eurotiomycetidae</taxon>
        <taxon>Eurotiales</taxon>
        <taxon>Aspergillaceae</taxon>
        <taxon>Aspergillus</taxon>
        <taxon>Aspergillus subgen. Circumdati</taxon>
    </lineage>
</organism>
<accession>A0A2Z5U1Z1</accession>
<gene>
    <name evidence="3" type="primary">himD</name>
</gene>
<feature type="chain" id="PRO_0000445948" description="Transcription factor himD">
    <location>
        <begin position="1"/>
        <end position="598"/>
    </location>
</feature>
<feature type="DNA-binding region" description="Zn(2)-C6 fungal-type" evidence="1">
    <location>
        <begin position="18"/>
        <end position="47"/>
    </location>
</feature>
<feature type="region of interest" description="Disordered" evidence="2">
    <location>
        <begin position="87"/>
        <end position="110"/>
    </location>
</feature>
<reference key="1">
    <citation type="journal article" date="2018" name="ChemBioChem">
        <title>Identification of the biosynthetic gene cluster for himeic acid A: a ubiquitin-activating enzyme (E1) inhibitor in Aspergillus japonicus MF275.</title>
        <authorList>
            <person name="Hashimoto M."/>
            <person name="Kato H."/>
            <person name="Katsuki A."/>
            <person name="Tsukamoto S."/>
            <person name="Fujii I."/>
        </authorList>
    </citation>
    <scope>NUCLEOTIDE SEQUENCE [GENOMIC DNA]</scope>
    <scope>FUNCTION</scope>
    <source>
        <strain>MF275</strain>
    </source>
</reference>
<dbReference type="EMBL" id="LC331673">
    <property type="protein sequence ID" value="BBA91556.1"/>
    <property type="molecule type" value="Genomic_DNA"/>
</dbReference>
<dbReference type="GO" id="GO:0005634">
    <property type="term" value="C:nucleus"/>
    <property type="evidence" value="ECO:0007669"/>
    <property type="project" value="UniProtKB-SubCell"/>
</dbReference>
<dbReference type="GO" id="GO:0000981">
    <property type="term" value="F:DNA-binding transcription factor activity, RNA polymerase II-specific"/>
    <property type="evidence" value="ECO:0007669"/>
    <property type="project" value="InterPro"/>
</dbReference>
<dbReference type="GO" id="GO:0000976">
    <property type="term" value="F:transcription cis-regulatory region binding"/>
    <property type="evidence" value="ECO:0007669"/>
    <property type="project" value="TreeGrafter"/>
</dbReference>
<dbReference type="GO" id="GO:0008270">
    <property type="term" value="F:zinc ion binding"/>
    <property type="evidence" value="ECO:0007669"/>
    <property type="project" value="InterPro"/>
</dbReference>
<dbReference type="GO" id="GO:0009893">
    <property type="term" value="P:positive regulation of metabolic process"/>
    <property type="evidence" value="ECO:0007669"/>
    <property type="project" value="UniProtKB-ARBA"/>
</dbReference>
<dbReference type="CDD" id="cd12148">
    <property type="entry name" value="fungal_TF_MHR"/>
    <property type="match status" value="1"/>
</dbReference>
<dbReference type="CDD" id="cd00067">
    <property type="entry name" value="GAL4"/>
    <property type="match status" value="1"/>
</dbReference>
<dbReference type="Gene3D" id="4.10.240.10">
    <property type="entry name" value="Zn(2)-C6 fungal-type DNA-binding domain"/>
    <property type="match status" value="1"/>
</dbReference>
<dbReference type="InterPro" id="IPR051089">
    <property type="entry name" value="prtT"/>
</dbReference>
<dbReference type="InterPro" id="IPR036864">
    <property type="entry name" value="Zn2-C6_fun-type_DNA-bd_sf"/>
</dbReference>
<dbReference type="InterPro" id="IPR001138">
    <property type="entry name" value="Zn2Cys6_DnaBD"/>
</dbReference>
<dbReference type="PANTHER" id="PTHR31845">
    <property type="entry name" value="FINGER DOMAIN PROTEIN, PUTATIVE-RELATED"/>
    <property type="match status" value="1"/>
</dbReference>
<dbReference type="PANTHER" id="PTHR31845:SF37">
    <property type="entry name" value="TRANSCRIPTION FACTOR DOMAIN-CONTAINING PROTEIN"/>
    <property type="match status" value="1"/>
</dbReference>
<dbReference type="SUPFAM" id="SSF57701">
    <property type="entry name" value="Zn2/Cys6 DNA-binding domain"/>
    <property type="match status" value="1"/>
</dbReference>
<dbReference type="PROSITE" id="PS00463">
    <property type="entry name" value="ZN2_CY6_FUNGAL_1"/>
    <property type="match status" value="1"/>
</dbReference>
<dbReference type="PROSITE" id="PS50048">
    <property type="entry name" value="ZN2_CY6_FUNGAL_2"/>
    <property type="match status" value="1"/>
</dbReference>
<name>HIMD_ASPJA</name>
<sequence>MSDRTRTTRYANGSLRTCQNCARAKIRCIRSVPTGSCDRCERLRKTCQFQPGRRANAGPSLSESKDRRIDALEAKLDRLLAQSTSATVSEASIDDKSPTTTPTTPRPPPDVIDSGLLTLEAASLLLQDYQRTLMPYCPFVMVPSPATAATLRRDKPFLFLAILTAALYDNMPLQRTLELEVKRTIGRCMIFDGPVSFDMLQGLLVHLAWCQYHSRPRRFSQYLHLAISIITDLQLDRAPEDRFWRTRVDFNGELDREISWGREERRAVVGFFWFSSSISQILQKRSSFSFIPYLETSCELLASTAEYDSDQHLLQLIQLQRLSERIIVASGQHTSEPHDADALEQCYRDRRSELDLYLAQLPFPLTDSHLLMMQYHTVELYLCQVTLFDHKPSAQRPRHDSPFPIEALRMGLTAARTLLDFYISLPLRREVAFNNAGWVQLGFVVTLACKLAVAAADPHIHPHMADLTRALDLSTMLSRCILRIQALVTSQMDARGDRDVFYHYEKRLKRAQWWFESRSLSRSQQQRNEPLPVAGAGEASSPRNARIAEIPAEEEFQVGYAAVSGDGFDFQWPGLFPDPTFDDMFGDWMAQGSSGFDD</sequence>
<protein>
    <recommendedName>
        <fullName evidence="3">Transcription factor himD</fullName>
    </recommendedName>
    <alternativeName>
        <fullName evidence="3">Himeic acid A biosynthesis cluster protein D</fullName>
    </alternativeName>
</protein>
<proteinExistence type="inferred from homology"/>
<keyword id="KW-0238">DNA-binding</keyword>
<keyword id="KW-0479">Metal-binding</keyword>
<keyword id="KW-0539">Nucleus</keyword>
<keyword id="KW-0804">Transcription</keyword>
<keyword id="KW-0805">Transcription regulation</keyword>
<keyword id="KW-0862">Zinc</keyword>
<evidence type="ECO:0000255" key="1">
    <source>
        <dbReference type="PROSITE-ProRule" id="PRU00227"/>
    </source>
</evidence>
<evidence type="ECO:0000256" key="2">
    <source>
        <dbReference type="SAM" id="MobiDB-lite"/>
    </source>
</evidence>
<evidence type="ECO:0000303" key="3">
    <source>
    </source>
</evidence>
<evidence type="ECO:0000305" key="4">
    <source>
    </source>
</evidence>